<feature type="chain" id="PRO_0000252540" description="Large ribosomal subunit protein bL19">
    <location>
        <begin position="1"/>
        <end position="109"/>
    </location>
</feature>
<protein>
    <recommendedName>
        <fullName evidence="1">Large ribosomal subunit protein bL19</fullName>
    </recommendedName>
    <alternativeName>
        <fullName evidence="2">50S ribosomal protein L19</fullName>
    </alternativeName>
</protein>
<keyword id="KW-1185">Reference proteome</keyword>
<keyword id="KW-0687">Ribonucleoprotein</keyword>
<keyword id="KW-0689">Ribosomal protein</keyword>
<evidence type="ECO:0000255" key="1">
    <source>
        <dbReference type="HAMAP-Rule" id="MF_00402"/>
    </source>
</evidence>
<evidence type="ECO:0000305" key="2"/>
<accession>Q1AW73</accession>
<organism>
    <name type="scientific">Rubrobacter xylanophilus (strain DSM 9941 / JCM 11954 / NBRC 16129 / PRD-1)</name>
    <dbReference type="NCBI Taxonomy" id="266117"/>
    <lineage>
        <taxon>Bacteria</taxon>
        <taxon>Bacillati</taxon>
        <taxon>Actinomycetota</taxon>
        <taxon>Rubrobacteria</taxon>
        <taxon>Rubrobacterales</taxon>
        <taxon>Rubrobacteraceae</taxon>
        <taxon>Rubrobacter</taxon>
    </lineage>
</organism>
<name>RL19_RUBXD</name>
<sequence>MITSEDIRERGVPDFKPGDTIRVEYRVVEGNRERTQAFEGLCIARRGSGISQTFVVRKNSFGVDVERIFPLHSPKIAGIKVISRGAPRRAKLYYIREKVGRKARVKKAR</sequence>
<comment type="function">
    <text evidence="1">This protein is located at the 30S-50S ribosomal subunit interface and may play a role in the structure and function of the aminoacyl-tRNA binding site.</text>
</comment>
<comment type="similarity">
    <text evidence="1">Belongs to the bacterial ribosomal protein bL19 family.</text>
</comment>
<reference key="1">
    <citation type="submission" date="2006-06" db="EMBL/GenBank/DDBJ databases">
        <title>Complete sequence of Rubrobacter xylanophilus DSM 9941.</title>
        <authorList>
            <consortium name="US DOE Joint Genome Institute"/>
            <person name="Copeland A."/>
            <person name="Lucas S."/>
            <person name="Lapidus A."/>
            <person name="Barry K."/>
            <person name="Detter J.C."/>
            <person name="Glavina del Rio T."/>
            <person name="Hammon N."/>
            <person name="Israni S."/>
            <person name="Dalin E."/>
            <person name="Tice H."/>
            <person name="Pitluck S."/>
            <person name="Munk A.C."/>
            <person name="Brettin T."/>
            <person name="Bruce D."/>
            <person name="Han C."/>
            <person name="Tapia R."/>
            <person name="Gilna P."/>
            <person name="Schmutz J."/>
            <person name="Larimer F."/>
            <person name="Land M."/>
            <person name="Hauser L."/>
            <person name="Kyrpides N."/>
            <person name="Lykidis A."/>
            <person name="da Costa M.S."/>
            <person name="Rainey F.A."/>
            <person name="Empadinhas N."/>
            <person name="Jolivet E."/>
            <person name="Battista J.R."/>
            <person name="Richardson P."/>
        </authorList>
    </citation>
    <scope>NUCLEOTIDE SEQUENCE [LARGE SCALE GENOMIC DNA]</scope>
    <source>
        <strain>DSM 9941 / JCM 11954 / NBRC 16129 / PRD-1</strain>
    </source>
</reference>
<gene>
    <name evidence="1" type="primary">rplS</name>
    <name type="ordered locus">Rxyl_1392</name>
</gene>
<proteinExistence type="inferred from homology"/>
<dbReference type="EMBL" id="CP000386">
    <property type="protein sequence ID" value="ABG04355.1"/>
    <property type="molecule type" value="Genomic_DNA"/>
</dbReference>
<dbReference type="RefSeq" id="WP_011564372.1">
    <property type="nucleotide sequence ID" value="NC_008148.1"/>
</dbReference>
<dbReference type="SMR" id="Q1AW73"/>
<dbReference type="STRING" id="266117.Rxyl_1392"/>
<dbReference type="KEGG" id="rxy:Rxyl_1392"/>
<dbReference type="eggNOG" id="COG0335">
    <property type="taxonomic scope" value="Bacteria"/>
</dbReference>
<dbReference type="HOGENOM" id="CLU_103507_2_1_11"/>
<dbReference type="OrthoDB" id="9803541at2"/>
<dbReference type="PhylomeDB" id="Q1AW73"/>
<dbReference type="Proteomes" id="UP000006637">
    <property type="component" value="Chromosome"/>
</dbReference>
<dbReference type="GO" id="GO:0022625">
    <property type="term" value="C:cytosolic large ribosomal subunit"/>
    <property type="evidence" value="ECO:0007669"/>
    <property type="project" value="TreeGrafter"/>
</dbReference>
<dbReference type="GO" id="GO:0003735">
    <property type="term" value="F:structural constituent of ribosome"/>
    <property type="evidence" value="ECO:0007669"/>
    <property type="project" value="InterPro"/>
</dbReference>
<dbReference type="GO" id="GO:0006412">
    <property type="term" value="P:translation"/>
    <property type="evidence" value="ECO:0007669"/>
    <property type="project" value="UniProtKB-UniRule"/>
</dbReference>
<dbReference type="Gene3D" id="2.30.30.790">
    <property type="match status" value="1"/>
</dbReference>
<dbReference type="HAMAP" id="MF_00402">
    <property type="entry name" value="Ribosomal_bL19"/>
    <property type="match status" value="1"/>
</dbReference>
<dbReference type="InterPro" id="IPR001857">
    <property type="entry name" value="Ribosomal_bL19"/>
</dbReference>
<dbReference type="InterPro" id="IPR038657">
    <property type="entry name" value="Ribosomal_bL19_sf"/>
</dbReference>
<dbReference type="InterPro" id="IPR008991">
    <property type="entry name" value="Translation_prot_SH3-like_sf"/>
</dbReference>
<dbReference type="NCBIfam" id="TIGR01024">
    <property type="entry name" value="rplS_bact"/>
    <property type="match status" value="1"/>
</dbReference>
<dbReference type="PANTHER" id="PTHR15680:SF9">
    <property type="entry name" value="LARGE RIBOSOMAL SUBUNIT PROTEIN BL19M"/>
    <property type="match status" value="1"/>
</dbReference>
<dbReference type="PANTHER" id="PTHR15680">
    <property type="entry name" value="RIBOSOMAL PROTEIN L19"/>
    <property type="match status" value="1"/>
</dbReference>
<dbReference type="Pfam" id="PF01245">
    <property type="entry name" value="Ribosomal_L19"/>
    <property type="match status" value="1"/>
</dbReference>
<dbReference type="PIRSF" id="PIRSF002191">
    <property type="entry name" value="Ribosomal_L19"/>
    <property type="match status" value="1"/>
</dbReference>
<dbReference type="PRINTS" id="PR00061">
    <property type="entry name" value="RIBOSOMALL19"/>
</dbReference>
<dbReference type="SUPFAM" id="SSF50104">
    <property type="entry name" value="Translation proteins SH3-like domain"/>
    <property type="match status" value="1"/>
</dbReference>